<name>RHBA_RHIME</name>
<proteinExistence type="inferred from homology"/>
<feature type="chain" id="PRO_0000120516" description="Diaminobutyrate--2-oxoglutarate aminotransferase">
    <location>
        <begin position="1"/>
        <end position="470"/>
    </location>
</feature>
<feature type="modified residue" description="N6-(pyridoxal phosphate)lysine" evidence="1">
    <location>
        <position position="304"/>
    </location>
</feature>
<sequence length="470" mass="50148">MPADLAARTSSKIFNGVDLMDASARADNAFYLDRQERRESNARSYPRRFPVALKSASGCIVTDVDGRSYLDCLAGAGTLALGHNHPEVIETLQQVLGSGLPLHTLDLTTPVKDRFVSDIFGTLPAGLRDEAKIQFCSPSGTDAVEAAIKLAKTATGRTDLVSFRGAYHGMSQGSLSLMGSLGPKASVGQLVPGAHFFPYPYAYRCPFGRGGNETATLAAEYFERALRDPEGGINRPAAVILEAVQGEGGVIPAPVEWLRAVRRVTRDLGIPLIVDEVQSGVGRTGSFYAFQKAGIIPDVVVLSKAIGGGLPLAVVIYREDLDLWKPGAHAGTFRGNQLAMAAGSKTLEIIERERLVERAAIAGRRLRANLERIAAQTPYIGEVRGEGLMLGVEVVDPEGLPDALGHPPHGQEIARMIQHEMFRAGIILETGGRFGSVLRLLPPLVISDAEIDQVSGALAAAFERLGRKAA</sequence>
<geneLocation type="plasmid">
    <name>pSymA</name>
    <name>megaplasmid 1</name>
</geneLocation>
<comment type="catalytic activity">
    <reaction>
        <text>L-2,4-diaminobutanoate + 2-oxoglutarate = L-aspartate 4-semialdehyde + L-glutamate</text>
        <dbReference type="Rhea" id="RHEA:11160"/>
        <dbReference type="ChEBI" id="CHEBI:16810"/>
        <dbReference type="ChEBI" id="CHEBI:29985"/>
        <dbReference type="ChEBI" id="CHEBI:58761"/>
        <dbReference type="ChEBI" id="CHEBI:537519"/>
        <dbReference type="EC" id="2.6.1.76"/>
    </reaction>
</comment>
<comment type="cofactor">
    <cofactor>
        <name>pyridoxal 5'-phosphate</name>
        <dbReference type="ChEBI" id="CHEBI:597326"/>
    </cofactor>
</comment>
<comment type="pathway">
    <text>Siderophore biosynthesis; rhizobactin biosynthesis.</text>
</comment>
<comment type="similarity">
    <text evidence="2">Belongs to the class-III pyridoxal-phosphate-dependent aminotransferase family.</text>
</comment>
<evidence type="ECO:0000255" key="1"/>
<evidence type="ECO:0000305" key="2"/>
<keyword id="KW-0032">Aminotransferase</keyword>
<keyword id="KW-0614">Plasmid</keyword>
<keyword id="KW-0663">Pyridoxal phosphate</keyword>
<keyword id="KW-1185">Reference proteome</keyword>
<keyword id="KW-0808">Transferase</keyword>
<dbReference type="EC" id="2.6.1.76"/>
<dbReference type="EMBL" id="AF110737">
    <property type="protein sequence ID" value="AAD09412.1"/>
    <property type="molecule type" value="Genomic_DNA"/>
</dbReference>
<dbReference type="EMBL" id="AE006469">
    <property type="protein sequence ID" value="AAK65916.1"/>
    <property type="molecule type" value="Genomic_DNA"/>
</dbReference>
<dbReference type="PIR" id="B95419">
    <property type="entry name" value="B95419"/>
</dbReference>
<dbReference type="PIR" id="T46814">
    <property type="entry name" value="T46814"/>
</dbReference>
<dbReference type="RefSeq" id="NP_436504.1">
    <property type="nucleotide sequence ID" value="NC_003037.1"/>
</dbReference>
<dbReference type="RefSeq" id="WP_010968201.1">
    <property type="nucleotide sequence ID" value="NC_003037.1"/>
</dbReference>
<dbReference type="SMR" id="Q9Z3R2"/>
<dbReference type="EnsemblBacteria" id="AAK65916">
    <property type="protein sequence ID" value="AAK65916"/>
    <property type="gene ID" value="SMa2400"/>
</dbReference>
<dbReference type="KEGG" id="sme:SMa2400"/>
<dbReference type="PATRIC" id="fig|266834.11.peg.1311"/>
<dbReference type="HOGENOM" id="CLU_016922_10_0_5"/>
<dbReference type="OrthoDB" id="9801834at2"/>
<dbReference type="BioCyc" id="MetaCyc:MONOMER-15538"/>
<dbReference type="UniPathway" id="UPA00020"/>
<dbReference type="Proteomes" id="UP000001976">
    <property type="component" value="Plasmid pSymA"/>
</dbReference>
<dbReference type="GO" id="GO:0045303">
    <property type="term" value="F:diaminobutyrate-2-oxoglutarate transaminase activity"/>
    <property type="evidence" value="ECO:0007669"/>
    <property type="project" value="UniProtKB-EC"/>
</dbReference>
<dbReference type="GO" id="GO:0030170">
    <property type="term" value="F:pyridoxal phosphate binding"/>
    <property type="evidence" value="ECO:0007669"/>
    <property type="project" value="InterPro"/>
</dbReference>
<dbReference type="GO" id="GO:0019289">
    <property type="term" value="P:rhizobactin 1021 biosynthetic process"/>
    <property type="evidence" value="ECO:0007669"/>
    <property type="project" value="UniProtKB-UniPathway"/>
</dbReference>
<dbReference type="CDD" id="cd00610">
    <property type="entry name" value="OAT_like"/>
    <property type="match status" value="1"/>
</dbReference>
<dbReference type="FunFam" id="3.40.640.10:FF:000091">
    <property type="entry name" value="Diaminobutyrate--2-oxoglutarate aminotransferase"/>
    <property type="match status" value="1"/>
</dbReference>
<dbReference type="Gene3D" id="3.90.1150.10">
    <property type="entry name" value="Aspartate Aminotransferase, domain 1"/>
    <property type="match status" value="1"/>
</dbReference>
<dbReference type="Gene3D" id="3.40.640.10">
    <property type="entry name" value="Type I PLP-dependent aspartate aminotransferase-like (Major domain)"/>
    <property type="match status" value="1"/>
</dbReference>
<dbReference type="InterPro" id="IPR005814">
    <property type="entry name" value="Aminotrans_3"/>
</dbReference>
<dbReference type="InterPro" id="IPR049704">
    <property type="entry name" value="Aminotrans_3_PPA_site"/>
</dbReference>
<dbReference type="InterPro" id="IPR004637">
    <property type="entry name" value="Dat"/>
</dbReference>
<dbReference type="InterPro" id="IPR015424">
    <property type="entry name" value="PyrdxlP-dep_Trfase"/>
</dbReference>
<dbReference type="InterPro" id="IPR015421">
    <property type="entry name" value="PyrdxlP-dep_Trfase_major"/>
</dbReference>
<dbReference type="InterPro" id="IPR015422">
    <property type="entry name" value="PyrdxlP-dep_Trfase_small"/>
</dbReference>
<dbReference type="NCBIfam" id="TIGR00709">
    <property type="entry name" value="dat"/>
    <property type="match status" value="1"/>
</dbReference>
<dbReference type="NCBIfam" id="NF005393">
    <property type="entry name" value="PRK06938.1"/>
    <property type="match status" value="1"/>
</dbReference>
<dbReference type="PANTHER" id="PTHR43552">
    <property type="entry name" value="DIAMINOBUTYRATE--2-OXOGLUTARATE AMINOTRANSFERASE"/>
    <property type="match status" value="1"/>
</dbReference>
<dbReference type="PANTHER" id="PTHR43552:SF1">
    <property type="entry name" value="DIAMINOBUTYRATE--2-OXOGLUTARATE AMINOTRANSFERASE"/>
    <property type="match status" value="1"/>
</dbReference>
<dbReference type="Pfam" id="PF00202">
    <property type="entry name" value="Aminotran_3"/>
    <property type="match status" value="1"/>
</dbReference>
<dbReference type="PIRSF" id="PIRSF000521">
    <property type="entry name" value="Transaminase_4ab_Lys_Orn"/>
    <property type="match status" value="1"/>
</dbReference>
<dbReference type="SUPFAM" id="SSF53383">
    <property type="entry name" value="PLP-dependent transferases"/>
    <property type="match status" value="1"/>
</dbReference>
<dbReference type="PROSITE" id="PS00600">
    <property type="entry name" value="AA_TRANSFER_CLASS_3"/>
    <property type="match status" value="1"/>
</dbReference>
<protein>
    <recommendedName>
        <fullName>Diaminobutyrate--2-oxoglutarate aminotransferase</fullName>
        <ecNumber>2.6.1.76</ecNumber>
    </recommendedName>
    <alternativeName>
        <fullName>Diaminobutyrate transaminase</fullName>
    </alternativeName>
    <alternativeName>
        <fullName>L-2,4-diaminobutyrate:2-ketoglutarate 4-aminotransferase</fullName>
        <shortName>DABA aminotransferase</shortName>
        <shortName>DABA-AT</shortName>
    </alternativeName>
    <alternativeName>
        <fullName>L-diaminobutyric acid transaminase</fullName>
    </alternativeName>
</protein>
<organism>
    <name type="scientific">Rhizobium meliloti (strain 1021)</name>
    <name type="common">Ensifer meliloti</name>
    <name type="synonym">Sinorhizobium meliloti</name>
    <dbReference type="NCBI Taxonomy" id="266834"/>
    <lineage>
        <taxon>Bacteria</taxon>
        <taxon>Pseudomonadati</taxon>
        <taxon>Pseudomonadota</taxon>
        <taxon>Alphaproteobacteria</taxon>
        <taxon>Hyphomicrobiales</taxon>
        <taxon>Rhizobiaceae</taxon>
        <taxon>Sinorhizobium/Ensifer group</taxon>
        <taxon>Sinorhizobium</taxon>
    </lineage>
</organism>
<gene>
    <name type="primary">rhbA</name>
    <name type="synonym">rhsA</name>
    <name type="ordered locus">RA1258</name>
    <name type="ORF">SMa2400</name>
</gene>
<accession>Q9Z3R2</accession>
<reference key="1">
    <citation type="journal article" date="2001" name="J. Bacteriol.">
        <title>Genetic organization of the region encoding regulation, biosynthesis, and transport of rhizobactin 1021, a siderophore produced by Sinorhizobium meliloti.</title>
        <authorList>
            <person name="Lynch D."/>
            <person name="O'Brien J."/>
            <person name="Welch T."/>
            <person name="Clarke P."/>
            <person name="Cuiv P.O."/>
            <person name="Crosa J.H."/>
            <person name="O'Connell M."/>
        </authorList>
    </citation>
    <scope>NUCLEOTIDE SEQUENCE [GENOMIC DNA]</scope>
    <source>
        <strain>RCR2011 / SU47</strain>
    </source>
</reference>
<reference key="2">
    <citation type="journal article" date="2001" name="Proc. Natl. Acad. Sci. U.S.A.">
        <title>Nucleotide sequence and predicted functions of the entire Sinorhizobium meliloti pSymA megaplasmid.</title>
        <authorList>
            <person name="Barnett M.J."/>
            <person name="Fisher R.F."/>
            <person name="Jones T."/>
            <person name="Komp C."/>
            <person name="Abola A.P."/>
            <person name="Barloy-Hubler F."/>
            <person name="Bowser L."/>
            <person name="Capela D."/>
            <person name="Galibert F."/>
            <person name="Gouzy J."/>
            <person name="Gurjal M."/>
            <person name="Hong A."/>
            <person name="Huizar L."/>
            <person name="Hyman R.W."/>
            <person name="Kahn D."/>
            <person name="Kahn M.L."/>
            <person name="Kalman S."/>
            <person name="Keating D.H."/>
            <person name="Palm C."/>
            <person name="Peck M.C."/>
            <person name="Surzycki R."/>
            <person name="Wells D.H."/>
            <person name="Yeh K.-C."/>
            <person name="Davis R.W."/>
            <person name="Federspiel N.A."/>
            <person name="Long S.R."/>
        </authorList>
    </citation>
    <scope>NUCLEOTIDE SEQUENCE [LARGE SCALE GENOMIC DNA]</scope>
    <source>
        <strain>1021</strain>
    </source>
</reference>
<reference key="3">
    <citation type="journal article" date="2001" name="Science">
        <title>The composite genome of the legume symbiont Sinorhizobium meliloti.</title>
        <authorList>
            <person name="Galibert F."/>
            <person name="Finan T.M."/>
            <person name="Long S.R."/>
            <person name="Puehler A."/>
            <person name="Abola P."/>
            <person name="Ampe F."/>
            <person name="Barloy-Hubler F."/>
            <person name="Barnett M.J."/>
            <person name="Becker A."/>
            <person name="Boistard P."/>
            <person name="Bothe G."/>
            <person name="Boutry M."/>
            <person name="Bowser L."/>
            <person name="Buhrmester J."/>
            <person name="Cadieu E."/>
            <person name="Capela D."/>
            <person name="Chain P."/>
            <person name="Cowie A."/>
            <person name="Davis R.W."/>
            <person name="Dreano S."/>
            <person name="Federspiel N.A."/>
            <person name="Fisher R.F."/>
            <person name="Gloux S."/>
            <person name="Godrie T."/>
            <person name="Goffeau A."/>
            <person name="Golding B."/>
            <person name="Gouzy J."/>
            <person name="Gurjal M."/>
            <person name="Hernandez-Lucas I."/>
            <person name="Hong A."/>
            <person name="Huizar L."/>
            <person name="Hyman R.W."/>
            <person name="Jones T."/>
            <person name="Kahn D."/>
            <person name="Kahn M.L."/>
            <person name="Kalman S."/>
            <person name="Keating D.H."/>
            <person name="Kiss E."/>
            <person name="Komp C."/>
            <person name="Lelaure V."/>
            <person name="Masuy D."/>
            <person name="Palm C."/>
            <person name="Peck M.C."/>
            <person name="Pohl T.M."/>
            <person name="Portetelle D."/>
            <person name="Purnelle B."/>
            <person name="Ramsperger U."/>
            <person name="Surzycki R."/>
            <person name="Thebault P."/>
            <person name="Vandenbol M."/>
            <person name="Vorhoelter F.J."/>
            <person name="Weidner S."/>
            <person name="Wells D.H."/>
            <person name="Wong K."/>
            <person name="Yeh K.-C."/>
            <person name="Batut J."/>
        </authorList>
    </citation>
    <scope>NUCLEOTIDE SEQUENCE [LARGE SCALE GENOMIC DNA]</scope>
    <source>
        <strain>1021</strain>
    </source>
</reference>